<organism>
    <name type="scientific">Campylobacter jejuni subsp. jejuni serotype O:23/36 (strain 81-176)</name>
    <dbReference type="NCBI Taxonomy" id="354242"/>
    <lineage>
        <taxon>Bacteria</taxon>
        <taxon>Pseudomonadati</taxon>
        <taxon>Campylobacterota</taxon>
        <taxon>Epsilonproteobacteria</taxon>
        <taxon>Campylobacterales</taxon>
        <taxon>Campylobacteraceae</taxon>
        <taxon>Campylobacter</taxon>
    </lineage>
</organism>
<proteinExistence type="inferred from homology"/>
<dbReference type="EC" id="6.3.2.1" evidence="1"/>
<dbReference type="EMBL" id="CP000538">
    <property type="protein sequence ID" value="EAQ73441.1"/>
    <property type="molecule type" value="Genomic_DNA"/>
</dbReference>
<dbReference type="RefSeq" id="WP_009882000.1">
    <property type="nucleotide sequence ID" value="NC_008787.1"/>
</dbReference>
<dbReference type="SMR" id="A1VY17"/>
<dbReference type="KEGG" id="cjj:CJJ81176_0320"/>
<dbReference type="eggNOG" id="COG0414">
    <property type="taxonomic scope" value="Bacteria"/>
</dbReference>
<dbReference type="HOGENOM" id="CLU_047148_0_0_7"/>
<dbReference type="UniPathway" id="UPA00028">
    <property type="reaction ID" value="UER00005"/>
</dbReference>
<dbReference type="Proteomes" id="UP000000646">
    <property type="component" value="Chromosome"/>
</dbReference>
<dbReference type="GO" id="GO:0005829">
    <property type="term" value="C:cytosol"/>
    <property type="evidence" value="ECO:0007669"/>
    <property type="project" value="TreeGrafter"/>
</dbReference>
<dbReference type="GO" id="GO:0005524">
    <property type="term" value="F:ATP binding"/>
    <property type="evidence" value="ECO:0007669"/>
    <property type="project" value="UniProtKB-KW"/>
</dbReference>
<dbReference type="GO" id="GO:0004592">
    <property type="term" value="F:pantoate-beta-alanine ligase activity"/>
    <property type="evidence" value="ECO:0007669"/>
    <property type="project" value="UniProtKB-UniRule"/>
</dbReference>
<dbReference type="GO" id="GO:0015940">
    <property type="term" value="P:pantothenate biosynthetic process"/>
    <property type="evidence" value="ECO:0007669"/>
    <property type="project" value="UniProtKB-UniRule"/>
</dbReference>
<dbReference type="CDD" id="cd00560">
    <property type="entry name" value="PanC"/>
    <property type="match status" value="1"/>
</dbReference>
<dbReference type="FunFam" id="3.30.1300.10:FF:000001">
    <property type="entry name" value="Pantothenate synthetase"/>
    <property type="match status" value="1"/>
</dbReference>
<dbReference type="FunFam" id="3.40.50.620:FF:000013">
    <property type="entry name" value="Pantothenate synthetase"/>
    <property type="match status" value="1"/>
</dbReference>
<dbReference type="Gene3D" id="3.40.50.620">
    <property type="entry name" value="HUPs"/>
    <property type="match status" value="1"/>
</dbReference>
<dbReference type="Gene3D" id="3.30.1300.10">
    <property type="entry name" value="Pantoate-beta-alanine ligase, C-terminal domain"/>
    <property type="match status" value="1"/>
</dbReference>
<dbReference type="HAMAP" id="MF_00158">
    <property type="entry name" value="PanC"/>
    <property type="match status" value="1"/>
</dbReference>
<dbReference type="InterPro" id="IPR004821">
    <property type="entry name" value="Cyt_trans-like"/>
</dbReference>
<dbReference type="InterPro" id="IPR003721">
    <property type="entry name" value="Pantoate_ligase"/>
</dbReference>
<dbReference type="InterPro" id="IPR042176">
    <property type="entry name" value="Pantoate_ligase_C"/>
</dbReference>
<dbReference type="InterPro" id="IPR014729">
    <property type="entry name" value="Rossmann-like_a/b/a_fold"/>
</dbReference>
<dbReference type="NCBIfam" id="TIGR00125">
    <property type="entry name" value="cyt_tran_rel"/>
    <property type="match status" value="1"/>
</dbReference>
<dbReference type="NCBIfam" id="TIGR00018">
    <property type="entry name" value="panC"/>
    <property type="match status" value="1"/>
</dbReference>
<dbReference type="PANTHER" id="PTHR21299">
    <property type="entry name" value="CYTIDYLATE KINASE/PANTOATE-BETA-ALANINE LIGASE"/>
    <property type="match status" value="1"/>
</dbReference>
<dbReference type="PANTHER" id="PTHR21299:SF1">
    <property type="entry name" value="PANTOATE--BETA-ALANINE LIGASE"/>
    <property type="match status" value="1"/>
</dbReference>
<dbReference type="Pfam" id="PF02569">
    <property type="entry name" value="Pantoate_ligase"/>
    <property type="match status" value="1"/>
</dbReference>
<dbReference type="SUPFAM" id="SSF52374">
    <property type="entry name" value="Nucleotidylyl transferase"/>
    <property type="match status" value="1"/>
</dbReference>
<accession>A1VY17</accession>
<feature type="chain" id="PRO_0000305421" description="Pantothenate synthetase">
    <location>
        <begin position="1"/>
        <end position="282"/>
    </location>
</feature>
<feature type="active site" description="Proton donor" evidence="1">
    <location>
        <position position="37"/>
    </location>
</feature>
<feature type="binding site" evidence="1">
    <location>
        <begin position="30"/>
        <end position="37"/>
    </location>
    <ligand>
        <name>ATP</name>
        <dbReference type="ChEBI" id="CHEBI:30616"/>
    </ligand>
</feature>
<feature type="binding site" evidence="1">
    <location>
        <position position="60"/>
    </location>
    <ligand>
        <name>(R)-pantoate</name>
        <dbReference type="ChEBI" id="CHEBI:15980"/>
    </ligand>
</feature>
<feature type="binding site" evidence="1">
    <location>
        <position position="60"/>
    </location>
    <ligand>
        <name>beta-alanine</name>
        <dbReference type="ChEBI" id="CHEBI:57966"/>
    </ligand>
</feature>
<feature type="binding site" evidence="1">
    <location>
        <begin position="146"/>
        <end position="149"/>
    </location>
    <ligand>
        <name>ATP</name>
        <dbReference type="ChEBI" id="CHEBI:30616"/>
    </ligand>
</feature>
<feature type="binding site" evidence="1">
    <location>
        <position position="152"/>
    </location>
    <ligand>
        <name>(R)-pantoate</name>
        <dbReference type="ChEBI" id="CHEBI:15980"/>
    </ligand>
</feature>
<feature type="binding site" evidence="1">
    <location>
        <position position="175"/>
    </location>
    <ligand>
        <name>ATP</name>
        <dbReference type="ChEBI" id="CHEBI:30616"/>
    </ligand>
</feature>
<feature type="binding site" evidence="1">
    <location>
        <begin position="183"/>
        <end position="186"/>
    </location>
    <ligand>
        <name>ATP</name>
        <dbReference type="ChEBI" id="CHEBI:30616"/>
    </ligand>
</feature>
<name>PANC_CAMJJ</name>
<comment type="function">
    <text evidence="1">Catalyzes the condensation of pantoate with beta-alanine in an ATP-dependent reaction via a pantoyl-adenylate intermediate.</text>
</comment>
<comment type="catalytic activity">
    <reaction evidence="1">
        <text>(R)-pantoate + beta-alanine + ATP = (R)-pantothenate + AMP + diphosphate + H(+)</text>
        <dbReference type="Rhea" id="RHEA:10912"/>
        <dbReference type="ChEBI" id="CHEBI:15378"/>
        <dbReference type="ChEBI" id="CHEBI:15980"/>
        <dbReference type="ChEBI" id="CHEBI:29032"/>
        <dbReference type="ChEBI" id="CHEBI:30616"/>
        <dbReference type="ChEBI" id="CHEBI:33019"/>
        <dbReference type="ChEBI" id="CHEBI:57966"/>
        <dbReference type="ChEBI" id="CHEBI:456215"/>
        <dbReference type="EC" id="6.3.2.1"/>
    </reaction>
</comment>
<comment type="pathway">
    <text evidence="1">Cofactor biosynthesis; (R)-pantothenate biosynthesis; (R)-pantothenate from (R)-pantoate and beta-alanine: step 1/1.</text>
</comment>
<comment type="subunit">
    <text evidence="1">Homodimer.</text>
</comment>
<comment type="subcellular location">
    <subcellularLocation>
        <location evidence="1">Cytoplasm</location>
    </subcellularLocation>
</comment>
<comment type="miscellaneous">
    <text evidence="1">The reaction proceeds by a bi uni uni bi ping pong mechanism.</text>
</comment>
<comment type="similarity">
    <text evidence="1">Belongs to the pantothenate synthetase family.</text>
</comment>
<sequence length="282" mass="31963">MQVITSVKEAKQIVKDWKSHQLSIGYVPTMGFLHDGHLSLVKNAKTQDKVIVSIFVNPMQFGPNEDFSSYPRDLERDIKMCQDNGVDMVFIPDAAQMYLKNFSTYVDMNTITDKLCGAKRLGHFRGVCTVLAKFFNILNPDIVYMGQKDAQQCVVVRHMVDDLNFDLKIQICPIIREEDGLAKSSRNVYLSEEERKASLAISQSIFLAEKLVQEGEKDTSKIIQAMKDILEKEKLIKIDYIELVDFNTMENIKNIADNVLGAVAAFVGKTRLIDNFLVQGLK</sequence>
<evidence type="ECO:0000255" key="1">
    <source>
        <dbReference type="HAMAP-Rule" id="MF_00158"/>
    </source>
</evidence>
<keyword id="KW-0067">ATP-binding</keyword>
<keyword id="KW-0963">Cytoplasm</keyword>
<keyword id="KW-0436">Ligase</keyword>
<keyword id="KW-0547">Nucleotide-binding</keyword>
<keyword id="KW-0566">Pantothenate biosynthesis</keyword>
<reference key="1">
    <citation type="submission" date="2006-12" db="EMBL/GenBank/DDBJ databases">
        <authorList>
            <person name="Fouts D.E."/>
            <person name="Nelson K.E."/>
            <person name="Sebastian Y."/>
        </authorList>
    </citation>
    <scope>NUCLEOTIDE SEQUENCE [LARGE SCALE GENOMIC DNA]</scope>
    <source>
        <strain>81-176</strain>
    </source>
</reference>
<gene>
    <name evidence="1" type="primary">panC</name>
    <name type="ordered locus">CJJ81176_0320</name>
</gene>
<protein>
    <recommendedName>
        <fullName evidence="1">Pantothenate synthetase</fullName>
        <shortName evidence="1">PS</shortName>
        <ecNumber evidence="1">6.3.2.1</ecNumber>
    </recommendedName>
    <alternativeName>
        <fullName evidence="1">Pantoate--beta-alanine ligase</fullName>
    </alternativeName>
    <alternativeName>
        <fullName evidence="1">Pantoate-activating enzyme</fullName>
    </alternativeName>
</protein>